<organism>
    <name type="scientific">Homo sapiens</name>
    <name type="common">Human</name>
    <dbReference type="NCBI Taxonomy" id="9606"/>
    <lineage>
        <taxon>Eukaryota</taxon>
        <taxon>Metazoa</taxon>
        <taxon>Chordata</taxon>
        <taxon>Craniata</taxon>
        <taxon>Vertebrata</taxon>
        <taxon>Euteleostomi</taxon>
        <taxon>Mammalia</taxon>
        <taxon>Eutheria</taxon>
        <taxon>Euarchontoglires</taxon>
        <taxon>Primates</taxon>
        <taxon>Haplorrhini</taxon>
        <taxon>Catarrhini</taxon>
        <taxon>Hominidae</taxon>
        <taxon>Homo</taxon>
    </lineage>
</organism>
<gene>
    <name type="primary">GP1BB</name>
</gene>
<accession>P13224</accession>
<accession>Q14422</accession>
<accession>Q8NG40</accession>
<evidence type="ECO:0000255" key="1"/>
<evidence type="ECO:0000269" key="2">
    <source>
    </source>
</evidence>
<evidence type="ECO:0000269" key="3">
    <source>
    </source>
</evidence>
<evidence type="ECO:0000269" key="4">
    <source>
    </source>
</evidence>
<evidence type="ECO:0000269" key="5">
    <source>
    </source>
</evidence>
<evidence type="ECO:0000269" key="6">
    <source>
    </source>
</evidence>
<evidence type="ECO:0000269" key="7">
    <source>
    </source>
</evidence>
<evidence type="ECO:0000269" key="8">
    <source>
    </source>
</evidence>
<evidence type="ECO:0000269" key="9">
    <source>
    </source>
</evidence>
<evidence type="ECO:0000303" key="10">
    <source>
    </source>
</evidence>
<evidence type="ECO:0007744" key="11">
    <source>
    </source>
</evidence>
<evidence type="ECO:0007744" key="12">
    <source>
    </source>
</evidence>
<evidence type="ECO:0007744" key="13">
    <source>
    </source>
</evidence>
<evidence type="ECO:0007829" key="14">
    <source>
        <dbReference type="PDB" id="3REZ"/>
    </source>
</evidence>
<evidence type="ECO:0007829" key="15">
    <source>
        <dbReference type="PDB" id="3RFE"/>
    </source>
</evidence>
<dbReference type="EMBL" id="J03259">
    <property type="protein sequence ID" value="AAA52594.1"/>
    <property type="molecule type" value="mRNA"/>
</dbReference>
<dbReference type="EMBL" id="AF006988">
    <property type="protein sequence ID" value="AAC39781.1"/>
    <property type="molecule type" value="Genomic_DNA"/>
</dbReference>
<dbReference type="EMBL" id="L20860">
    <property type="protein sequence ID" value="AAA20398.1"/>
    <property type="molecule type" value="mRNA"/>
</dbReference>
<dbReference type="EMBL" id="U59632">
    <property type="protein sequence ID" value="AAB93437.1"/>
    <property type="molecule type" value="mRNA"/>
</dbReference>
<dbReference type="EMBL" id="AB086231">
    <property type="protein sequence ID" value="BAC00777.1"/>
    <property type="molecule type" value="Genomic_DNA"/>
</dbReference>
<dbReference type="CCDS" id="CCDS42980.1">
    <molecule id="P13224-1"/>
</dbReference>
<dbReference type="PIR" id="A54137">
    <property type="entry name" value="NBHUIB"/>
</dbReference>
<dbReference type="PIR" id="I55604">
    <property type="entry name" value="I55604"/>
</dbReference>
<dbReference type="RefSeq" id="NP_000398.1">
    <molecule id="P13224-1"/>
    <property type="nucleotide sequence ID" value="NM_000407.5"/>
</dbReference>
<dbReference type="PDB" id="3REZ">
    <property type="method" value="X-ray"/>
    <property type="resolution" value="2.35 A"/>
    <property type="chains" value="A/B/C/D=26-146"/>
</dbReference>
<dbReference type="PDB" id="3RFE">
    <property type="method" value="X-ray"/>
    <property type="resolution" value="1.24 A"/>
    <property type="chains" value="A/B=26-146"/>
</dbReference>
<dbReference type="PDB" id="8WFS">
    <property type="method" value="EM"/>
    <property type="resolution" value="3.36 A"/>
    <property type="chains" value="B/C/b/c=26-206"/>
</dbReference>
<dbReference type="PDBsum" id="3REZ"/>
<dbReference type="PDBsum" id="3RFE"/>
<dbReference type="PDBsum" id="8WFS"/>
<dbReference type="EMDB" id="EMD-37498"/>
<dbReference type="SMR" id="P13224"/>
<dbReference type="BioGRID" id="109074">
    <property type="interactions" value="64"/>
</dbReference>
<dbReference type="ComplexPortal" id="CPX-114">
    <property type="entry name" value="Glycoprotein Ib-IX-V complex"/>
</dbReference>
<dbReference type="ComplexPortal" id="CPX-117">
    <property type="entry name" value="Glycoprotein Ib-IX-V-Filamin-A complex"/>
</dbReference>
<dbReference type="CORUM" id="P13224"/>
<dbReference type="FunCoup" id="P13224">
    <property type="interactions" value="954"/>
</dbReference>
<dbReference type="IntAct" id="P13224">
    <property type="interactions" value="55"/>
</dbReference>
<dbReference type="MINT" id="P13224"/>
<dbReference type="STRING" id="9606.ENSP00000383382"/>
<dbReference type="GlyCosmos" id="P13224">
    <property type="glycosylation" value="1 site, No reported glycans"/>
</dbReference>
<dbReference type="GlyGen" id="P13224">
    <property type="glycosylation" value="4 sites, 1 O-linked glycan (2 sites)"/>
</dbReference>
<dbReference type="iPTMnet" id="P13224"/>
<dbReference type="PhosphoSitePlus" id="P13224"/>
<dbReference type="BioMuta" id="GP1BB"/>
<dbReference type="DMDM" id="121532"/>
<dbReference type="OGP" id="P13224"/>
<dbReference type="jPOST" id="P13224"/>
<dbReference type="MassIVE" id="P13224"/>
<dbReference type="PaxDb" id="9606-ENSP00000383382"/>
<dbReference type="PeptideAtlas" id="P13224"/>
<dbReference type="ProteomicsDB" id="52900">
    <molecule id="P13224-1"/>
</dbReference>
<dbReference type="ProteomicsDB" id="52901">
    <molecule id="P13224-2"/>
</dbReference>
<dbReference type="Pumba" id="P13224"/>
<dbReference type="Antibodypedia" id="44871">
    <property type="antibodies" value="147 antibodies from 28 providers"/>
</dbReference>
<dbReference type="DNASU" id="2812"/>
<dbReference type="Ensembl" id="ENST00000366425.4">
    <molecule id="P13224-1"/>
    <property type="protein sequence ID" value="ENSP00000383382.2"/>
    <property type="gene ID" value="ENSG00000203618.6"/>
</dbReference>
<dbReference type="GeneID" id="2812"/>
<dbReference type="KEGG" id="hsa:2812"/>
<dbReference type="MANE-Select" id="ENST00000366425.4">
    <property type="protein sequence ID" value="ENSP00000383382.2"/>
    <property type="RefSeq nucleotide sequence ID" value="NM_000407.5"/>
    <property type="RefSeq protein sequence ID" value="NP_000398.1"/>
</dbReference>
<dbReference type="UCSC" id="uc062bnf.1">
    <molecule id="P13224-1"/>
    <property type="organism name" value="human"/>
</dbReference>
<dbReference type="AGR" id="HGNC:4440"/>
<dbReference type="CTD" id="2812"/>
<dbReference type="DisGeNET" id="2812"/>
<dbReference type="GeneCards" id="GP1BB"/>
<dbReference type="HGNC" id="HGNC:4440">
    <property type="gene designation" value="GP1BB"/>
</dbReference>
<dbReference type="HPA" id="ENSG00000203618">
    <property type="expression patterns" value="Tissue enriched (brain)"/>
</dbReference>
<dbReference type="MalaCards" id="GP1BB"/>
<dbReference type="MIM" id="138720">
    <property type="type" value="gene"/>
</dbReference>
<dbReference type="MIM" id="231200">
    <property type="type" value="phenotype"/>
</dbReference>
<dbReference type="neXtProt" id="NX_P13224"/>
<dbReference type="OpenTargets" id="ENSG00000203618"/>
<dbReference type="Orphanet" id="567">
    <property type="disease" value="22q11.2 deletion syndrome"/>
</dbReference>
<dbReference type="Orphanet" id="140957">
    <property type="disease" value="Autosomal dominant macrothrombocytopenia"/>
</dbReference>
<dbReference type="Orphanet" id="274">
    <property type="disease" value="Bernard-Soulier syndrome"/>
</dbReference>
<dbReference type="Orphanet" id="853">
    <property type="disease" value="Fetal and neonatal alloimmune thrombocytopenia"/>
</dbReference>
<dbReference type="PharmGKB" id="PA179"/>
<dbReference type="VEuPathDB" id="HostDB:ENSG00000203618"/>
<dbReference type="eggNOG" id="KOG0619">
    <property type="taxonomic scope" value="Eukaryota"/>
</dbReference>
<dbReference type="GeneTree" id="ENSGT00530000064244"/>
<dbReference type="HOGENOM" id="CLU_094615_0_0_1"/>
<dbReference type="InParanoid" id="P13224"/>
<dbReference type="OMA" id="CPVPCKC"/>
<dbReference type="OrthoDB" id="676979at2759"/>
<dbReference type="PAN-GO" id="P13224">
    <property type="GO annotations" value="0 GO annotations based on evolutionary models"/>
</dbReference>
<dbReference type="PhylomeDB" id="P13224"/>
<dbReference type="PathwayCommons" id="P13224"/>
<dbReference type="Reactome" id="R-HSA-140837">
    <property type="pathway name" value="Intrinsic Pathway of Fibrin Clot Formation"/>
</dbReference>
<dbReference type="Reactome" id="R-HSA-430116">
    <property type="pathway name" value="GP1b-IX-V activation signalling"/>
</dbReference>
<dbReference type="Reactome" id="R-HSA-75892">
    <property type="pathway name" value="Platelet Adhesion to exposed collagen"/>
</dbReference>
<dbReference type="Reactome" id="R-HSA-76009">
    <property type="pathway name" value="Platelet Aggregation (Plug Formation)"/>
</dbReference>
<dbReference type="Reactome" id="R-HSA-9673221">
    <property type="pathway name" value="Defective F9 activation"/>
</dbReference>
<dbReference type="Reactome" id="R-HSA-9845620">
    <property type="pathway name" value="Enhanced binding of GP1BA variant to VWF multimer:collagen"/>
</dbReference>
<dbReference type="Reactome" id="R-HSA-9846298">
    <property type="pathway name" value="Defective binding of VWF variant to GPIb:IX:V"/>
</dbReference>
<dbReference type="SignaLink" id="P13224"/>
<dbReference type="SIGNOR" id="P13224"/>
<dbReference type="BioGRID-ORCS" id="2812">
    <property type="hits" value="33 hits in 1162 CRISPR screens"/>
</dbReference>
<dbReference type="EvolutionaryTrace" id="P13224"/>
<dbReference type="GeneWiki" id="GP1BB"/>
<dbReference type="GenomeRNAi" id="2812"/>
<dbReference type="Pharos" id="P13224">
    <property type="development level" value="Tbio"/>
</dbReference>
<dbReference type="PRO" id="PR:P13224"/>
<dbReference type="Proteomes" id="UP000005640">
    <property type="component" value="Chromosome 22"/>
</dbReference>
<dbReference type="RNAct" id="P13224">
    <property type="molecule type" value="protein"/>
</dbReference>
<dbReference type="Bgee" id="ENSG00000203618">
    <property type="expression patterns" value="Expressed in monocyte and 94 other cell types or tissues"/>
</dbReference>
<dbReference type="GO" id="GO:1990779">
    <property type="term" value="C:glycoprotein Ib-IX-V complex"/>
    <property type="evidence" value="ECO:0000353"/>
    <property type="project" value="ComplexPortal"/>
</dbReference>
<dbReference type="GO" id="GO:0005886">
    <property type="term" value="C:plasma membrane"/>
    <property type="evidence" value="ECO:0000304"/>
    <property type="project" value="Reactome"/>
</dbReference>
<dbReference type="GO" id="GO:0042802">
    <property type="term" value="F:identical protein binding"/>
    <property type="evidence" value="ECO:0000353"/>
    <property type="project" value="IntAct"/>
</dbReference>
<dbReference type="GO" id="GO:0004888">
    <property type="term" value="F:transmembrane signaling receptor activity"/>
    <property type="evidence" value="ECO:0000303"/>
    <property type="project" value="ProtInc"/>
</dbReference>
<dbReference type="GO" id="GO:0007597">
    <property type="term" value="P:blood coagulation, intrinsic pathway"/>
    <property type="evidence" value="ECO:0000353"/>
    <property type="project" value="ComplexPortal"/>
</dbReference>
<dbReference type="GO" id="GO:0007155">
    <property type="term" value="P:cell adhesion"/>
    <property type="evidence" value="ECO:0007669"/>
    <property type="project" value="UniProtKB-KW"/>
</dbReference>
<dbReference type="GO" id="GO:0007166">
    <property type="term" value="P:cell surface receptor signaling pathway"/>
    <property type="evidence" value="ECO:0000303"/>
    <property type="project" value="ProtInc"/>
</dbReference>
<dbReference type="GO" id="GO:0035855">
    <property type="term" value="P:megakaryocyte development"/>
    <property type="evidence" value="ECO:0000266"/>
    <property type="project" value="ComplexPortal"/>
</dbReference>
<dbReference type="GO" id="GO:0030168">
    <property type="term" value="P:platelet activation"/>
    <property type="evidence" value="ECO:0000303"/>
    <property type="project" value="UniProtKB"/>
</dbReference>
<dbReference type="GO" id="GO:0010572">
    <property type="term" value="P:positive regulation of platelet activation"/>
    <property type="evidence" value="ECO:0000314"/>
    <property type="project" value="ComplexPortal"/>
</dbReference>
<dbReference type="GO" id="GO:0051209">
    <property type="term" value="P:release of sequestered calcium ion into cytosol"/>
    <property type="evidence" value="ECO:0000314"/>
    <property type="project" value="ComplexPortal"/>
</dbReference>
<dbReference type="FunFam" id="3.80.10.10:FF:000441">
    <property type="entry name" value="Platelet glycoprotein Ib beta chain"/>
    <property type="match status" value="1"/>
</dbReference>
<dbReference type="Gene3D" id="3.80.10.10">
    <property type="entry name" value="Ribonuclease Inhibitor"/>
    <property type="match status" value="1"/>
</dbReference>
<dbReference type="InterPro" id="IPR000483">
    <property type="entry name" value="Cys-rich_flank_reg_C"/>
</dbReference>
<dbReference type="InterPro" id="IPR052313">
    <property type="entry name" value="GPIb-IX-V_Complex"/>
</dbReference>
<dbReference type="InterPro" id="IPR032675">
    <property type="entry name" value="LRR_dom_sf"/>
</dbReference>
<dbReference type="InterPro" id="IPR000372">
    <property type="entry name" value="LRRNT"/>
</dbReference>
<dbReference type="PANTHER" id="PTHR22650">
    <property type="entry name" value="GLYCOPROTEIN IB BETA"/>
    <property type="match status" value="1"/>
</dbReference>
<dbReference type="PANTHER" id="PTHR22650:SF7">
    <property type="entry name" value="PLATELET GLYCOPROTEIN IB BETA CHAIN"/>
    <property type="match status" value="1"/>
</dbReference>
<dbReference type="SMART" id="SM00082">
    <property type="entry name" value="LRRCT"/>
    <property type="match status" value="1"/>
</dbReference>
<dbReference type="SMART" id="SM00013">
    <property type="entry name" value="LRRNT"/>
    <property type="match status" value="1"/>
</dbReference>
<dbReference type="SUPFAM" id="SSF52058">
    <property type="entry name" value="L domain-like"/>
    <property type="match status" value="1"/>
</dbReference>
<comment type="function">
    <text>Gp-Ib, a surface membrane protein of platelets, participates in the formation of platelet plugs by binding to von Willebrand factor, which is already bound to the subendothelium.</text>
</comment>
<comment type="subunit">
    <text evidence="2 3 4">Two GP-Ib beta are disulfide-linked to one GP-Ib alpha. GP-IX is complexed with the GP-Ib heterodimer via a non covalent linkage. Interacts with TRAF4 (PubMed:20946164).</text>
</comment>
<comment type="interaction">
    <interactant intactId="EBI-2833037">
        <id>P13224</id>
    </interactant>
    <interactant intactId="EBI-297082">
        <id>P07359</id>
        <label>GP1BA</label>
    </interactant>
    <organismsDiffer>false</organismsDiffer>
    <experiments>6</experiments>
</comment>
<comment type="interaction">
    <interactant intactId="EBI-2833037">
        <id>P13224</id>
    </interactant>
    <interactant intactId="EBI-2833037">
        <id>P13224</id>
        <label>GP1BB</label>
    </interactant>
    <organismsDiffer>false</organismsDiffer>
    <experiments>2</experiments>
</comment>
<comment type="subcellular location">
    <subcellularLocation>
        <location>Membrane</location>
        <topology>Single-pass type I membrane protein</topology>
    </subcellularLocation>
</comment>
<comment type="alternative products">
    <event type="alternative splicing"/>
    <isoform>
        <id>P13224-1</id>
        <name>1</name>
        <sequence type="displayed"/>
    </isoform>
    <isoform>
        <id>P13224-2</id>
        <name>2</name>
        <sequence type="described" ref="VSP_032671"/>
    </isoform>
</comment>
<comment type="tissue specificity">
    <text evidence="8">Expressed in heart and brain.</text>
</comment>
<comment type="disease" evidence="9">
    <disease id="DI-01274">
        <name>Bernard-Soulier syndrome</name>
        <acronym>BSS</acronym>
        <description>A coagulation disorder characterized by a prolonged bleeding time, unusually large platelets, thrombocytopenia, and impaired prothrombin consumption.</description>
        <dbReference type="MIM" id="231200"/>
    </disease>
    <text>The disease is caused by variants affecting the gene represented in this entry.</text>
</comment>
<comment type="miscellaneous">
    <text>Platelet activation apparently involves disruption of the macromolecular complex of GP-Ib with the platelet glycoprotein IX (GP-IX) and dissociation of GP-Ib from the actin-binding protein.</text>
</comment>
<protein>
    <recommendedName>
        <fullName>Platelet glycoprotein Ib beta chain</fullName>
        <shortName>GP-Ib beta</shortName>
        <shortName>GPIb-beta</shortName>
        <shortName>GPIbB</shortName>
    </recommendedName>
    <alternativeName>
        <fullName>Antigen CD42b-beta</fullName>
    </alternativeName>
    <cdAntigenName>CD42c</cdAntigenName>
</protein>
<feature type="signal peptide" evidence="7">
    <location>
        <begin position="1"/>
        <end position="25"/>
    </location>
</feature>
<feature type="chain" id="PRO_0000021345" description="Platelet glycoprotein Ib beta chain">
    <location>
        <begin position="26"/>
        <end position="206"/>
    </location>
</feature>
<feature type="topological domain" description="Extracellular" evidence="1">
    <location>
        <begin position="27"/>
        <end position="147"/>
    </location>
</feature>
<feature type="transmembrane region" description="Helical" evidence="1">
    <location>
        <begin position="148"/>
        <end position="172"/>
    </location>
</feature>
<feature type="topological domain" description="Cytoplasmic" evidence="1">
    <location>
        <begin position="173"/>
        <end position="206"/>
    </location>
</feature>
<feature type="domain" description="LRRNT">
    <location>
        <begin position="27"/>
        <end position="55"/>
    </location>
</feature>
<feature type="repeat" description="LRR">
    <location>
        <begin position="60"/>
        <end position="83"/>
    </location>
</feature>
<feature type="domain" description="LRRCT">
    <location>
        <begin position="89"/>
        <end position="143"/>
    </location>
</feature>
<feature type="modified residue" description="Phosphoserine; by PKA" evidence="5 11 12 13">
    <location>
        <position position="191"/>
    </location>
</feature>
<feature type="modified residue" description="Phosphothreonine" evidence="11 12 13">
    <location>
        <position position="193"/>
    </location>
</feature>
<feature type="glycosylation site" description="N-linked (GlcNAc...) asparagine" evidence="4 6">
    <location>
        <position position="66"/>
    </location>
</feature>
<feature type="disulfide bond" evidence="4">
    <location>
        <begin position="26"/>
        <end position="32"/>
    </location>
</feature>
<feature type="disulfide bond" evidence="4">
    <location>
        <begin position="30"/>
        <end position="39"/>
    </location>
</feature>
<feature type="disulfide bond" evidence="4">
    <location>
        <begin position="93"/>
        <end position="118"/>
    </location>
</feature>
<feature type="disulfide bond" evidence="4">
    <location>
        <begin position="95"/>
        <end position="141"/>
    </location>
</feature>
<feature type="disulfide bond" description="Interchain (with C-500 or C-501 in GP1BA)" evidence="4">
    <location>
        <position position="147"/>
    </location>
</feature>
<feature type="splice variant" id="VSP_032671" description="In isoform 2." evidence="10">
    <original>MGS</original>
    <variation>MIPSRHTMLRFLPVVNAASCPGDRRTMLVNVAAGVRVLRVPLRAGGSGSLSGLRPPAIVCYLPLQRASAASGLFLARPQHCGRCGRGRGGAALSLGSPAYASRCRVSRAAVFSPWAPVSLESGRAPGCSLGRPGLRGALVVWLQLGETWVRLRGDFQPACGVVRVERLAGYRDAGHQGLDGAGPAVWVLRDVAQVPADRSAYCGASLA</variation>
    <location>
        <begin position="1"/>
        <end position="3"/>
    </location>
</feature>
<feature type="sequence variant" id="VAR_025000" description="In BSS; dbSNP:rs121909750." evidence="9">
    <original>Y</original>
    <variation>C</variation>
    <location>
        <position position="113"/>
    </location>
</feature>
<feature type="sequence variant" id="VAR_025001" description="In BSS; dbSNP:rs121909751." evidence="9">
    <original>A</original>
    <variation>P</variation>
    <location>
        <position position="133"/>
    </location>
</feature>
<feature type="strand" evidence="15">
    <location>
        <begin position="31"/>
        <end position="33"/>
    </location>
</feature>
<feature type="strand" evidence="15">
    <location>
        <begin position="36"/>
        <end position="38"/>
    </location>
</feature>
<feature type="turn" evidence="15">
    <location>
        <begin position="46"/>
        <end position="48"/>
    </location>
</feature>
<feature type="strand" evidence="15">
    <location>
        <begin position="58"/>
        <end position="61"/>
    </location>
</feature>
<feature type="turn" evidence="15">
    <location>
        <begin position="72"/>
        <end position="74"/>
    </location>
</feature>
<feature type="helix" evidence="15">
    <location>
        <begin position="75"/>
        <end position="77"/>
    </location>
</feature>
<feature type="strand" evidence="15">
    <location>
        <begin position="83"/>
        <end position="85"/>
    </location>
</feature>
<feature type="helix" evidence="15">
    <location>
        <begin position="95"/>
        <end position="97"/>
    </location>
</feature>
<feature type="helix" evidence="15">
    <location>
        <begin position="98"/>
        <end position="105"/>
    </location>
</feature>
<feature type="helix" evidence="15">
    <location>
        <begin position="111"/>
        <end position="113"/>
    </location>
</feature>
<feature type="strand" evidence="14">
    <location>
        <begin position="117"/>
        <end position="121"/>
    </location>
</feature>
<feature type="turn" evidence="15">
    <location>
        <begin position="122"/>
        <end position="126"/>
    </location>
</feature>
<feature type="helix" evidence="15">
    <location>
        <begin position="129"/>
        <end position="131"/>
    </location>
</feature>
<feature type="helix" evidence="15">
    <location>
        <begin position="134"/>
        <end position="139"/>
    </location>
</feature>
<proteinExistence type="evidence at protein level"/>
<sequence length="206" mass="21718">MGSGPRGALSLLLLLLAPPSRPAAGCPAPCSCAGTLVDCGRRGLTWASLPTAFPVDTTELVLTGNNLTALPPGLLDALPALRTAHLGANPWRCDCRLVPLRAWLAGRPERAPYRDLRCVAPPALRGRLLPYLAEDELRAACAPGPLCWGALAAQLALLGLGLLHALLLVLLLCRLRRLRARARARAAARLSLTDPLVAERAGTDES</sequence>
<reference key="1">
    <citation type="journal article" date="1988" name="Proc. Natl. Acad. Sci. U.S.A.">
        <title>The alpha and beta chains of human platelet glycoprotein Ib are both transmembrane proteins containing a leucine-rich amino acid sequence.</title>
        <authorList>
            <person name="Lopez J.A."/>
            <person name="Chung D.W."/>
            <person name="Fujikawa K."/>
            <person name="Hagen F.S."/>
            <person name="Davie E.W."/>
            <person name="Roth G.J."/>
        </authorList>
    </citation>
    <scope>NUCLEOTIDE SEQUENCE [MRNA] (ISOFORM 1)</scope>
    <scope>GLYCOSYLATION AT ASN-66</scope>
</reference>
<reference key="2">
    <citation type="journal article" date="1994" name="J. Biol. Chem.">
        <title>Structural characterization and chromosomal location of the gene encoding human platelet glycoprotein Ib beta.</title>
        <authorList>
            <person name="Yagi M."/>
            <person name="Edelhoff S."/>
            <person name="Disteche C.M."/>
            <person name="Roth G.J."/>
        </authorList>
    </citation>
    <scope>NUCLEOTIDE SEQUENCE [GENOMIC DNA]</scope>
    <source>
        <tissue>Brain</tissue>
    </source>
</reference>
<reference key="3">
    <citation type="journal article" date="1994" name="J. Clin. Invest.">
        <title>Complementary DNA cloning of the alternatively expressed endothelial cell glycoprotein Ib beta (GPIb beta) and localization of the GPIb beta gene to chromosome 22.</title>
        <authorList>
            <person name="Kelly M.D."/>
            <person name="Essex D.W."/>
            <person name="Shapiro S.S."/>
            <person name="Meloni F.J."/>
            <person name="Druck T."/>
            <person name="Huebner K."/>
            <person name="Konkle B.A."/>
        </authorList>
    </citation>
    <scope>NUCLEOTIDE SEQUENCE [MRNA] (ISOFORM 2)</scope>
    <scope>TISSUE SPECIFICITY</scope>
    <source>
        <tissue>Umbilical vein</tissue>
    </source>
</reference>
<reference key="4">
    <citation type="journal article" date="1997" name="J. Clin. Invest.">
        <title>Alternative expression of platelet glycoprotein Ib(beta) mRNA from an adjacent 5' gene with an imperfect polyadenylation signal sequence.</title>
        <authorList>
            <person name="Zieger B."/>
            <person name="Hashimoto Y."/>
            <person name="Ware J."/>
        </authorList>
    </citation>
    <scope>NUCLEOTIDE SEQUENCE [MRNA] (ISOFORM 1)</scope>
</reference>
<reference key="5">
    <citation type="journal article" date="1997" name="Blood">
        <title>Missense mutations of the glycoprotein (GP) Ib beta gene impairing the GPIb alpha/beta disulfide linkage in a family with giant platelet disorder.</title>
        <authorList>
            <person name="Kunishima S."/>
            <person name="Lopez J.A."/>
            <person name="Kobayashi S."/>
            <person name="Imai N."/>
            <person name="Kamiya T."/>
            <person name="Saito H."/>
            <person name="Naoe T."/>
        </authorList>
    </citation>
    <scope>NUCLEOTIDE SEQUENCE [GENOMIC DNA] OF 11-206</scope>
    <scope>VARIANTS BSS CYS-113 AND PRO-133</scope>
</reference>
<reference key="6">
    <citation type="journal article" date="1987" name="Biochem. Biophys. Res. Commun.">
        <title>Isolation and characterization of the alpha and beta chains of human platelet glycoprotein Ib.</title>
        <authorList>
            <person name="Canfield V.A."/>
            <person name="Ozols J."/>
            <person name="Nugent D."/>
            <person name="Roth G.J."/>
        </authorList>
    </citation>
    <scope>PROTEIN SEQUENCE OF 27-40</scope>
    <scope>SIGNAL SEQUENCE CLEAVAGE SITE</scope>
</reference>
<reference key="7">
    <citation type="journal article" date="2003" name="Nat. Biotechnol.">
        <title>Exploring proteomes and analyzing protein processing by mass spectrometric identification of sorted N-terminal peptides.</title>
        <authorList>
            <person name="Gevaert K."/>
            <person name="Goethals M."/>
            <person name="Martens L."/>
            <person name="Van Damme J."/>
            <person name="Staes A."/>
            <person name="Thomas G.R."/>
            <person name="Vandekerckhove J."/>
        </authorList>
    </citation>
    <scope>PROTEIN SEQUENCE OF 83-92 AND 190-200</scope>
    <source>
        <tissue>Platelet</tissue>
    </source>
</reference>
<reference key="8">
    <citation type="journal article" date="1989" name="J. Biol. Chem.">
        <title>Platelet glycoprotein Ib beta is phosphorylated on serine 166 by cyclic AMP-dependent protein kinase.</title>
        <authorList>
            <person name="Wardell M.R."/>
            <person name="Reynolds C.C."/>
            <person name="Berndt M.C."/>
            <person name="Wallace R.W."/>
            <person name="Fox J.E.B."/>
        </authorList>
    </citation>
    <scope>PHOSPHORYLATION AT SER-191</scope>
    <scope>PROTEIN SEQUENCE OF 186-200</scope>
</reference>
<reference key="9">
    <citation type="journal article" date="2007" name="Blood">
        <title>Glycoprotein Ibalpha forms disulfide bonds with 2 glycoprotein Ibbeta subunits in the resting platelet.</title>
        <authorList>
            <person name="Luo S.Z."/>
            <person name="Mo X."/>
            <person name="Afshar-Kharghan V."/>
            <person name="Srinivasan S."/>
            <person name="Lopez J.A."/>
            <person name="Li R."/>
        </authorList>
    </citation>
    <scope>SUBUNIT</scope>
    <scope>INTERCHAIN DISULFIDE BOND</scope>
</reference>
<reference key="10">
    <citation type="journal article" date="2008" name="J. Proteome Res.">
        <title>Phosphorylation analysis of primary human T lymphocytes using sequential IMAC and titanium oxide enrichment.</title>
        <authorList>
            <person name="Carrascal M."/>
            <person name="Ovelleiro D."/>
            <person name="Casas V."/>
            <person name="Gay M."/>
            <person name="Abian J."/>
        </authorList>
    </citation>
    <scope>IDENTIFICATION BY MASS SPECTROMETRY [LARGE SCALE ANALYSIS]</scope>
    <source>
        <tissue>T-cell</tissue>
    </source>
</reference>
<reference key="11">
    <citation type="journal article" date="2008" name="J. Proteome Res.">
        <title>Phosphoproteome of resting human platelets.</title>
        <authorList>
            <person name="Zahedi R.P."/>
            <person name="Lewandrowski U."/>
            <person name="Wiesner J."/>
            <person name="Wortelkamp S."/>
            <person name="Moebius J."/>
            <person name="Schuetz C."/>
            <person name="Walter U."/>
            <person name="Gambaryan S."/>
            <person name="Sickmann A."/>
        </authorList>
    </citation>
    <scope>PHOSPHORYLATION [LARGE SCALE ANALYSIS] AT SER-191 AND THR-193</scope>
    <scope>IDENTIFICATION BY MASS SPECTROMETRY [LARGE SCALE ANALYSIS]</scope>
    <source>
        <tissue>Platelet</tissue>
    </source>
</reference>
<reference key="12">
    <citation type="journal article" date="2011" name="J. Thromb. Haemost.">
        <title>TNF receptor-associated factor 4 (TRAF4) is a novel binding partner of glycoprotein Ib and glycoprotein VI in human platelets.</title>
        <authorList>
            <person name="Arthur J.F."/>
            <person name="Shen Y."/>
            <person name="Gardiner E.E."/>
            <person name="Coleman L."/>
            <person name="Murphy D."/>
            <person name="Kenny D."/>
            <person name="Andrews R.K."/>
            <person name="Berndt M.C."/>
        </authorList>
    </citation>
    <scope>INTERACTION WITH TRAF4</scope>
</reference>
<reference key="13">
    <citation type="journal article" date="2013" name="J. Proteome Res.">
        <title>Toward a comprehensive characterization of a human cancer cell phosphoproteome.</title>
        <authorList>
            <person name="Zhou H."/>
            <person name="Di Palma S."/>
            <person name="Preisinger C."/>
            <person name="Peng M."/>
            <person name="Polat A.N."/>
            <person name="Heck A.J."/>
            <person name="Mohammed S."/>
        </authorList>
    </citation>
    <scope>PHOSPHORYLATION [LARGE SCALE ANALYSIS] AT SER-191 AND THR-193</scope>
    <scope>IDENTIFICATION BY MASS SPECTROMETRY [LARGE SCALE ANALYSIS]</scope>
    <source>
        <tissue>Erythroleukemia</tissue>
    </source>
</reference>
<reference key="14">
    <citation type="journal article" date="2014" name="J. Proteomics">
        <title>An enzyme assisted RP-RPLC approach for in-depth analysis of human liver phosphoproteome.</title>
        <authorList>
            <person name="Bian Y."/>
            <person name="Song C."/>
            <person name="Cheng K."/>
            <person name="Dong M."/>
            <person name="Wang F."/>
            <person name="Huang J."/>
            <person name="Sun D."/>
            <person name="Wang L."/>
            <person name="Ye M."/>
            <person name="Zou H."/>
        </authorList>
    </citation>
    <scope>PHOSPHORYLATION [LARGE SCALE ANALYSIS] AT SER-191 AND THR-193</scope>
    <scope>IDENTIFICATION BY MASS SPECTROMETRY [LARGE SCALE ANALYSIS]</scope>
    <source>
        <tissue>Liver</tissue>
    </source>
</reference>
<reference key="15">
    <citation type="journal article" date="2011" name="Blood">
        <title>Quaternary organization of GPIb-IX complex and insights into Bernard-Soulier syndrome revealed by the structures of GPIbbeta and a GPIbbeta/GPIX chimera.</title>
        <authorList>
            <person name="McEwan P.A."/>
            <person name="Yang W."/>
            <person name="Carr K.H."/>
            <person name="Mo X."/>
            <person name="Zheng X."/>
            <person name="Li R."/>
            <person name="Emsley J."/>
        </authorList>
    </citation>
    <scope>X-RAY CRYSTALLOGRAPHY (1.24 ANGSTROMS) OF 26-146</scope>
    <scope>GLYCOSYLATION AT ASN-66</scope>
    <scope>DISULFIDE BONDS</scope>
</reference>
<name>GP1BB_HUMAN</name>
<keyword id="KW-0002">3D-structure</keyword>
<keyword id="KW-0025">Alternative splicing</keyword>
<keyword id="KW-0087">Bernard Soulier syndrome</keyword>
<keyword id="KW-0094">Blood coagulation</keyword>
<keyword id="KW-0130">Cell adhesion</keyword>
<keyword id="KW-0903">Direct protein sequencing</keyword>
<keyword id="KW-0225">Disease variant</keyword>
<keyword id="KW-1015">Disulfide bond</keyword>
<keyword id="KW-0325">Glycoprotein</keyword>
<keyword id="KW-0356">Hemostasis</keyword>
<keyword id="KW-0433">Leucine-rich repeat</keyword>
<keyword id="KW-0472">Membrane</keyword>
<keyword id="KW-0597">Phosphoprotein</keyword>
<keyword id="KW-1267">Proteomics identification</keyword>
<keyword id="KW-1185">Reference proteome</keyword>
<keyword id="KW-0732">Signal</keyword>
<keyword id="KW-0812">Transmembrane</keyword>
<keyword id="KW-1133">Transmembrane helix</keyword>